<proteinExistence type="evidence at transcript level"/>
<reference evidence="5" key="1">
    <citation type="journal article" date="2004" name="Genome Res.">
        <title>The status, quality, and expansion of the NIH full-length cDNA project: the Mammalian Gene Collection (MGC).</title>
        <authorList>
            <consortium name="The MGC Project Team"/>
        </authorList>
    </citation>
    <scope>NUCLEOTIDE SEQUENCE [LARGE SCALE MRNA]</scope>
    <source>
        <tissue evidence="5">Testis</tissue>
    </source>
</reference>
<protein>
    <recommendedName>
        <fullName>Dr1-associated corepressor</fullName>
    </recommendedName>
    <alternativeName>
        <fullName>Dr1-associated protein 1</fullName>
    </alternativeName>
    <alternativeName>
        <fullName>Negative cofactor 2-alpha</fullName>
        <shortName>NC2-alpha</shortName>
    </alternativeName>
</protein>
<evidence type="ECO:0000250" key="1">
    <source>
        <dbReference type="UniProtKB" id="Q14919"/>
    </source>
</evidence>
<evidence type="ECO:0000255" key="2"/>
<evidence type="ECO:0000256" key="3">
    <source>
        <dbReference type="SAM" id="MobiDB-lite"/>
    </source>
</evidence>
<evidence type="ECO:0000305" key="4"/>
<evidence type="ECO:0000312" key="5">
    <source>
        <dbReference type="EMBL" id="AAI27525.1"/>
    </source>
</evidence>
<sequence length="205" mass="22326">MPSKKKKYNARFPPARIKKIMQTDEEIGKVAAAVPVIISRALELFLESLLKKACQVTQSRNAKTMTTSHLKQCIELEQQFDFLKDLVASVPDMQGDGEDNHTDGDKGPRRGRKPGSSGRKNGGTGSKSKDKKLSGTDSEQEDESEDTDTDGEEETPQAPPQASHPPAHFQSPPTPFMPFTSPLPLPPAPPGPSAPEAEDEEDYDS</sequence>
<name>NC2A_RAT</name>
<accession>A0JPP1</accession>
<gene>
    <name evidence="1" type="primary">Drap1</name>
</gene>
<comment type="function">
    <text evidence="1">The association of the DR1/DRAP1 heterodimer with TBP results in a functional repression of both activated and basal transcription of class II genes. This interaction precludes the formation of a transcription-competent complex by inhibiting the association of TFIIA and/or TFIIB with TBP. Can bind to DNA on its own (By similarity).</text>
</comment>
<comment type="subunit">
    <text evidence="1">Heterodimer with DR1. Binds BTAF1 (By similarity).</text>
</comment>
<comment type="subcellular location">
    <subcellularLocation>
        <location evidence="1">Nucleus</location>
    </subcellularLocation>
</comment>
<comment type="PTM">
    <text evidence="1">Phosphorylation reduces DNA binding, but has no effect on heterodimerization and TBP binding.</text>
</comment>
<comment type="similarity">
    <text evidence="4">Belongs to the NC2 alpha/DRAP1 family.</text>
</comment>
<organism>
    <name type="scientific">Rattus norvegicus</name>
    <name type="common">Rat</name>
    <dbReference type="NCBI Taxonomy" id="10116"/>
    <lineage>
        <taxon>Eukaryota</taxon>
        <taxon>Metazoa</taxon>
        <taxon>Chordata</taxon>
        <taxon>Craniata</taxon>
        <taxon>Vertebrata</taxon>
        <taxon>Euteleostomi</taxon>
        <taxon>Mammalia</taxon>
        <taxon>Eutheria</taxon>
        <taxon>Euarchontoglires</taxon>
        <taxon>Glires</taxon>
        <taxon>Rodentia</taxon>
        <taxon>Myomorpha</taxon>
        <taxon>Muroidea</taxon>
        <taxon>Muridae</taxon>
        <taxon>Murinae</taxon>
        <taxon>Rattus</taxon>
    </lineage>
</organism>
<keyword id="KW-0238">DNA-binding</keyword>
<keyword id="KW-0539">Nucleus</keyword>
<keyword id="KW-0597">Phosphoprotein</keyword>
<keyword id="KW-1185">Reference proteome</keyword>
<keyword id="KW-0678">Repressor</keyword>
<keyword id="KW-0804">Transcription</keyword>
<keyword id="KW-0805">Transcription regulation</keyword>
<dbReference type="EMBL" id="BC127524">
    <property type="protein sequence ID" value="AAI27525.1"/>
    <property type="molecule type" value="mRNA"/>
</dbReference>
<dbReference type="RefSeq" id="NP_001071136.1">
    <property type="nucleotide sequence ID" value="NM_001077668.2"/>
</dbReference>
<dbReference type="SMR" id="A0JPP1"/>
<dbReference type="FunCoup" id="A0JPP1">
    <property type="interactions" value="841"/>
</dbReference>
<dbReference type="STRING" id="10116.ENSRNOP00000032674"/>
<dbReference type="iPTMnet" id="A0JPP1"/>
<dbReference type="PhosphoSitePlus" id="A0JPP1"/>
<dbReference type="jPOST" id="A0JPP1"/>
<dbReference type="PaxDb" id="10116-ENSRNOP00000032674"/>
<dbReference type="PeptideAtlas" id="A0JPP1"/>
<dbReference type="Ensembl" id="ENSRNOT00000038138.5">
    <property type="protein sequence ID" value="ENSRNOP00000032674.4"/>
    <property type="gene ID" value="ENSRNOG00000020527.6"/>
</dbReference>
<dbReference type="GeneID" id="293674"/>
<dbReference type="KEGG" id="rno:293674"/>
<dbReference type="UCSC" id="RGD:1308477">
    <property type="organism name" value="rat"/>
</dbReference>
<dbReference type="AGR" id="RGD:1308477"/>
<dbReference type="CTD" id="10589"/>
<dbReference type="RGD" id="1308477">
    <property type="gene designation" value="Drap1"/>
</dbReference>
<dbReference type="eggNOG" id="KOG1659">
    <property type="taxonomic scope" value="Eukaryota"/>
</dbReference>
<dbReference type="GeneTree" id="ENSGT00390000012424"/>
<dbReference type="HOGENOM" id="CLU_045277_10_0_1"/>
<dbReference type="InParanoid" id="A0JPP1"/>
<dbReference type="OMA" id="TEVEPAH"/>
<dbReference type="OrthoDB" id="653904at2759"/>
<dbReference type="PhylomeDB" id="A0JPP1"/>
<dbReference type="TreeFam" id="TF313964"/>
<dbReference type="PRO" id="PR:A0JPP1"/>
<dbReference type="Proteomes" id="UP000002494">
    <property type="component" value="Chromosome 1"/>
</dbReference>
<dbReference type="Bgee" id="ENSRNOG00000020527">
    <property type="expression patterns" value="Expressed in testis and 20 other cell types or tissues"/>
</dbReference>
<dbReference type="GO" id="GO:0017054">
    <property type="term" value="C:negative cofactor 2 complex"/>
    <property type="evidence" value="ECO:0000318"/>
    <property type="project" value="GO_Central"/>
</dbReference>
<dbReference type="GO" id="GO:0005634">
    <property type="term" value="C:nucleus"/>
    <property type="evidence" value="ECO:0000266"/>
    <property type="project" value="RGD"/>
</dbReference>
<dbReference type="GO" id="GO:0090575">
    <property type="term" value="C:RNA polymerase II transcription regulator complex"/>
    <property type="evidence" value="ECO:0000266"/>
    <property type="project" value="RGD"/>
</dbReference>
<dbReference type="GO" id="GO:0001046">
    <property type="term" value="F:core promoter sequence-specific DNA binding"/>
    <property type="evidence" value="ECO:0000318"/>
    <property type="project" value="GO_Central"/>
</dbReference>
<dbReference type="GO" id="GO:0042802">
    <property type="term" value="F:identical protein binding"/>
    <property type="evidence" value="ECO:0000266"/>
    <property type="project" value="RGD"/>
</dbReference>
<dbReference type="GO" id="GO:0046982">
    <property type="term" value="F:protein heterodimerization activity"/>
    <property type="evidence" value="ECO:0007669"/>
    <property type="project" value="InterPro"/>
</dbReference>
<dbReference type="GO" id="GO:0016251">
    <property type="term" value="F:RNA polymerase II general transcription initiation factor activity"/>
    <property type="evidence" value="ECO:0000266"/>
    <property type="project" value="RGD"/>
</dbReference>
<dbReference type="GO" id="GO:0001091">
    <property type="term" value="F:RNA polymerase II general transcription initiation factor binding"/>
    <property type="evidence" value="ECO:0000266"/>
    <property type="project" value="RGD"/>
</dbReference>
<dbReference type="GO" id="GO:0017025">
    <property type="term" value="F:TBP-class protein binding"/>
    <property type="evidence" value="ECO:0000266"/>
    <property type="project" value="RGD"/>
</dbReference>
<dbReference type="GO" id="GO:0003714">
    <property type="term" value="F:transcription corepressor activity"/>
    <property type="evidence" value="ECO:0000266"/>
    <property type="project" value="RGD"/>
</dbReference>
<dbReference type="GO" id="GO:0000122">
    <property type="term" value="P:negative regulation of transcription by RNA polymerase II"/>
    <property type="evidence" value="ECO:0000266"/>
    <property type="project" value="RGD"/>
</dbReference>
<dbReference type="GO" id="GO:0006366">
    <property type="term" value="P:transcription by RNA polymerase II"/>
    <property type="evidence" value="ECO:0000318"/>
    <property type="project" value="GO_Central"/>
</dbReference>
<dbReference type="CDD" id="cd22906">
    <property type="entry name" value="HFD_DRAP1"/>
    <property type="match status" value="1"/>
</dbReference>
<dbReference type="FunFam" id="1.10.20.10:FF:000032">
    <property type="entry name" value="dr1-associated corepressor isoform X1"/>
    <property type="match status" value="1"/>
</dbReference>
<dbReference type="Gene3D" id="1.10.20.10">
    <property type="entry name" value="Histone, subunit A"/>
    <property type="match status" value="1"/>
</dbReference>
<dbReference type="InterPro" id="IPR003958">
    <property type="entry name" value="CBFA_NFYB_domain"/>
</dbReference>
<dbReference type="InterPro" id="IPR009072">
    <property type="entry name" value="Histone-fold"/>
</dbReference>
<dbReference type="InterPro" id="IPR050568">
    <property type="entry name" value="Transcr_DNA_Rep_Reg"/>
</dbReference>
<dbReference type="PANTHER" id="PTHR10252:SF5">
    <property type="entry name" value="DR1-ASSOCIATED COREPRESSOR"/>
    <property type="match status" value="1"/>
</dbReference>
<dbReference type="PANTHER" id="PTHR10252">
    <property type="entry name" value="HISTONE-LIKE TRANSCRIPTION FACTOR CCAAT-RELATED"/>
    <property type="match status" value="1"/>
</dbReference>
<dbReference type="Pfam" id="PF00808">
    <property type="entry name" value="CBFD_NFYB_HMF"/>
    <property type="match status" value="1"/>
</dbReference>
<dbReference type="SUPFAM" id="SSF47113">
    <property type="entry name" value="Histone-fold"/>
    <property type="match status" value="1"/>
</dbReference>
<feature type="chain" id="PRO_0000311698" description="Dr1-associated corepressor">
    <location>
        <begin position="1"/>
        <end position="205"/>
    </location>
</feature>
<feature type="domain" description="Histone-fold" evidence="2">
    <location>
        <begin position="14"/>
        <end position="77"/>
    </location>
</feature>
<feature type="region of interest" description="Disordered" evidence="3">
    <location>
        <begin position="91"/>
        <end position="205"/>
    </location>
</feature>
<feature type="compositionally biased region" description="Basic and acidic residues" evidence="3">
    <location>
        <begin position="98"/>
        <end position="108"/>
    </location>
</feature>
<feature type="compositionally biased region" description="Acidic residues" evidence="3">
    <location>
        <begin position="138"/>
        <end position="155"/>
    </location>
</feature>
<feature type="compositionally biased region" description="Pro residues" evidence="3">
    <location>
        <begin position="172"/>
        <end position="193"/>
    </location>
</feature>
<feature type="compositionally biased region" description="Acidic residues" evidence="3">
    <location>
        <begin position="196"/>
        <end position="205"/>
    </location>
</feature>